<name>HIS3_PSEPW</name>
<keyword id="KW-0028">Amino-acid biosynthesis</keyword>
<keyword id="KW-0963">Cytoplasm</keyword>
<keyword id="KW-0368">Histidine biosynthesis</keyword>
<keyword id="KW-0378">Hydrolase</keyword>
<keyword id="KW-0460">Magnesium</keyword>
<keyword id="KW-0479">Metal-binding</keyword>
<keyword id="KW-0862">Zinc</keyword>
<organism>
    <name type="scientific">Pseudomonas putida (strain W619)</name>
    <dbReference type="NCBI Taxonomy" id="390235"/>
    <lineage>
        <taxon>Bacteria</taxon>
        <taxon>Pseudomonadati</taxon>
        <taxon>Pseudomonadota</taxon>
        <taxon>Gammaproteobacteria</taxon>
        <taxon>Pseudomonadales</taxon>
        <taxon>Pseudomonadaceae</taxon>
        <taxon>Pseudomonas</taxon>
    </lineage>
</organism>
<proteinExistence type="inferred from homology"/>
<feature type="chain" id="PRO_1000135361" description="Phosphoribosyl-AMP cyclohydrolase">
    <location>
        <begin position="1"/>
        <end position="130"/>
    </location>
</feature>
<feature type="binding site" evidence="1">
    <location>
        <position position="77"/>
    </location>
    <ligand>
        <name>Mg(2+)</name>
        <dbReference type="ChEBI" id="CHEBI:18420"/>
    </ligand>
</feature>
<feature type="binding site" evidence="1">
    <location>
        <position position="78"/>
    </location>
    <ligand>
        <name>Zn(2+)</name>
        <dbReference type="ChEBI" id="CHEBI:29105"/>
        <note>ligand shared between dimeric partners</note>
    </ligand>
</feature>
<feature type="binding site" evidence="1">
    <location>
        <position position="79"/>
    </location>
    <ligand>
        <name>Mg(2+)</name>
        <dbReference type="ChEBI" id="CHEBI:18420"/>
    </ligand>
</feature>
<feature type="binding site" evidence="1">
    <location>
        <position position="81"/>
    </location>
    <ligand>
        <name>Mg(2+)</name>
        <dbReference type="ChEBI" id="CHEBI:18420"/>
    </ligand>
</feature>
<feature type="binding site" evidence="1">
    <location>
        <position position="95"/>
    </location>
    <ligand>
        <name>Zn(2+)</name>
        <dbReference type="ChEBI" id="CHEBI:29105"/>
        <note>ligand shared between dimeric partners</note>
    </ligand>
</feature>
<feature type="binding site" evidence="1">
    <location>
        <position position="102"/>
    </location>
    <ligand>
        <name>Zn(2+)</name>
        <dbReference type="ChEBI" id="CHEBI:29105"/>
        <note>ligand shared between dimeric partners</note>
    </ligand>
</feature>
<comment type="function">
    <text evidence="1">Catalyzes the hydrolysis of the adenine ring of phosphoribosyl-AMP.</text>
</comment>
<comment type="catalytic activity">
    <reaction evidence="1">
        <text>1-(5-phospho-beta-D-ribosyl)-5'-AMP + H2O = 1-(5-phospho-beta-D-ribosyl)-5-[(5-phospho-beta-D-ribosylamino)methylideneamino]imidazole-4-carboxamide</text>
        <dbReference type="Rhea" id="RHEA:20049"/>
        <dbReference type="ChEBI" id="CHEBI:15377"/>
        <dbReference type="ChEBI" id="CHEBI:58435"/>
        <dbReference type="ChEBI" id="CHEBI:59457"/>
        <dbReference type="EC" id="3.5.4.19"/>
    </reaction>
</comment>
<comment type="cofactor">
    <cofactor evidence="1">
        <name>Mg(2+)</name>
        <dbReference type="ChEBI" id="CHEBI:18420"/>
    </cofactor>
    <text evidence="1">Binds 1 Mg(2+) ion per subunit.</text>
</comment>
<comment type="cofactor">
    <cofactor evidence="1">
        <name>Zn(2+)</name>
        <dbReference type="ChEBI" id="CHEBI:29105"/>
    </cofactor>
    <text evidence="1">Binds 1 zinc ion per subunit.</text>
</comment>
<comment type="pathway">
    <text evidence="1">Amino-acid biosynthesis; L-histidine biosynthesis; L-histidine from 5-phospho-alpha-D-ribose 1-diphosphate: step 3/9.</text>
</comment>
<comment type="subunit">
    <text evidence="1">Homodimer.</text>
</comment>
<comment type="subcellular location">
    <subcellularLocation>
        <location evidence="1">Cytoplasm</location>
    </subcellularLocation>
</comment>
<comment type="similarity">
    <text evidence="1">Belongs to the PRA-CH family.</text>
</comment>
<accession>B1J2S5</accession>
<evidence type="ECO:0000255" key="1">
    <source>
        <dbReference type="HAMAP-Rule" id="MF_01021"/>
    </source>
</evidence>
<reference key="1">
    <citation type="submission" date="2008-02" db="EMBL/GenBank/DDBJ databases">
        <title>Complete sequence of Pseudomonas putida W619.</title>
        <authorList>
            <person name="Copeland A."/>
            <person name="Lucas S."/>
            <person name="Lapidus A."/>
            <person name="Barry K."/>
            <person name="Detter J.C."/>
            <person name="Glavina del Rio T."/>
            <person name="Dalin E."/>
            <person name="Tice H."/>
            <person name="Pitluck S."/>
            <person name="Chain P."/>
            <person name="Malfatti S."/>
            <person name="Shin M."/>
            <person name="Vergez L."/>
            <person name="Schmutz J."/>
            <person name="Larimer F."/>
            <person name="Land M."/>
            <person name="Hauser L."/>
            <person name="Kyrpides N."/>
            <person name="Kim E."/>
            <person name="Taghavi S."/>
            <person name="Vangronsveld D."/>
            <person name="van der Lelie D."/>
            <person name="Richardson P."/>
        </authorList>
    </citation>
    <scope>NUCLEOTIDE SEQUENCE [LARGE SCALE GENOMIC DNA]</scope>
    <source>
        <strain>W619</strain>
    </source>
</reference>
<sequence>MKEWLDEIKWNSDGLVPAIAQDHKTGRVLMMAWMNRESLALTAAEQRAIYWSRSRGKLWRKGEESGHVQKLHEMRLDCDADVIILMVEQLGHIACHTGRESCFYRVFEDGQWKTVDPVLKDPDAIYNAGH</sequence>
<gene>
    <name evidence="1" type="primary">hisI</name>
    <name type="ordered locus">PputW619_0451</name>
</gene>
<dbReference type="EC" id="3.5.4.19" evidence="1"/>
<dbReference type="EMBL" id="CP000949">
    <property type="protein sequence ID" value="ACA70956.1"/>
    <property type="molecule type" value="Genomic_DNA"/>
</dbReference>
<dbReference type="SMR" id="B1J2S5"/>
<dbReference type="STRING" id="390235.PputW619_0451"/>
<dbReference type="KEGG" id="ppw:PputW619_0451"/>
<dbReference type="eggNOG" id="COG0139">
    <property type="taxonomic scope" value="Bacteria"/>
</dbReference>
<dbReference type="HOGENOM" id="CLU_048577_5_0_6"/>
<dbReference type="OrthoDB" id="9795769at2"/>
<dbReference type="UniPathway" id="UPA00031">
    <property type="reaction ID" value="UER00008"/>
</dbReference>
<dbReference type="GO" id="GO:0005737">
    <property type="term" value="C:cytoplasm"/>
    <property type="evidence" value="ECO:0007669"/>
    <property type="project" value="UniProtKB-SubCell"/>
</dbReference>
<dbReference type="GO" id="GO:0000287">
    <property type="term" value="F:magnesium ion binding"/>
    <property type="evidence" value="ECO:0007669"/>
    <property type="project" value="UniProtKB-UniRule"/>
</dbReference>
<dbReference type="GO" id="GO:0004635">
    <property type="term" value="F:phosphoribosyl-AMP cyclohydrolase activity"/>
    <property type="evidence" value="ECO:0007669"/>
    <property type="project" value="UniProtKB-UniRule"/>
</dbReference>
<dbReference type="GO" id="GO:0008270">
    <property type="term" value="F:zinc ion binding"/>
    <property type="evidence" value="ECO:0007669"/>
    <property type="project" value="UniProtKB-UniRule"/>
</dbReference>
<dbReference type="GO" id="GO:0000105">
    <property type="term" value="P:L-histidine biosynthetic process"/>
    <property type="evidence" value="ECO:0007669"/>
    <property type="project" value="UniProtKB-UniRule"/>
</dbReference>
<dbReference type="FunFam" id="3.10.20.810:FF:000001">
    <property type="entry name" value="Histidine biosynthesis bifunctional protein HisIE"/>
    <property type="match status" value="1"/>
</dbReference>
<dbReference type="Gene3D" id="3.10.20.810">
    <property type="entry name" value="Phosphoribosyl-AMP cyclohydrolase"/>
    <property type="match status" value="1"/>
</dbReference>
<dbReference type="HAMAP" id="MF_01021">
    <property type="entry name" value="HisI"/>
    <property type="match status" value="1"/>
</dbReference>
<dbReference type="InterPro" id="IPR026660">
    <property type="entry name" value="PRA-CH"/>
</dbReference>
<dbReference type="InterPro" id="IPR002496">
    <property type="entry name" value="PRib_AMP_CycHydrolase_dom"/>
</dbReference>
<dbReference type="InterPro" id="IPR038019">
    <property type="entry name" value="PRib_AMP_CycHydrolase_sf"/>
</dbReference>
<dbReference type="NCBIfam" id="NF000768">
    <property type="entry name" value="PRK00051.1"/>
    <property type="match status" value="1"/>
</dbReference>
<dbReference type="PANTHER" id="PTHR42945">
    <property type="entry name" value="HISTIDINE BIOSYNTHESIS BIFUNCTIONAL PROTEIN"/>
    <property type="match status" value="1"/>
</dbReference>
<dbReference type="PANTHER" id="PTHR42945:SF1">
    <property type="entry name" value="HISTIDINE BIOSYNTHESIS BIFUNCTIONAL PROTEIN HIS7"/>
    <property type="match status" value="1"/>
</dbReference>
<dbReference type="Pfam" id="PF01502">
    <property type="entry name" value="PRA-CH"/>
    <property type="match status" value="1"/>
</dbReference>
<dbReference type="SUPFAM" id="SSF141734">
    <property type="entry name" value="HisI-like"/>
    <property type="match status" value="1"/>
</dbReference>
<protein>
    <recommendedName>
        <fullName evidence="1">Phosphoribosyl-AMP cyclohydrolase</fullName>
        <shortName evidence="1">PRA-CH</shortName>
        <ecNumber evidence="1">3.5.4.19</ecNumber>
    </recommendedName>
</protein>